<evidence type="ECO:0000255" key="1">
    <source>
        <dbReference type="HAMAP-Rule" id="MF_00182"/>
    </source>
</evidence>
<proteinExistence type="inferred from homology"/>
<feature type="chain" id="PRO_0000083046" description="Methionyl-tRNA formyltransferase">
    <location>
        <begin position="1"/>
        <end position="311"/>
    </location>
</feature>
<feature type="binding site" evidence="1">
    <location>
        <begin position="109"/>
        <end position="112"/>
    </location>
    <ligand>
        <name>(6S)-5,6,7,8-tetrahydrofolate</name>
        <dbReference type="ChEBI" id="CHEBI:57453"/>
    </ligand>
</feature>
<sequence>MTKIIFMGTPDFSTTVLEMLIAEHDVIAVVTQPDRPVGRKRVMTPPPVKKVAMKYDLPVYQPEKLSGSEELEQLLQLDVDLIVTAAFGQLLPESLLALPKLGAINVHASLLPKYRGGAPIHQAIIDGEQETGITIMYMVKKLDAGNIISQQAIKIEENDNVGTMHDKLSVLGADLLKETLPSIIEGTNESVPQDDTQATFASNIRREDERISWNKPGRQVFNQIRGLSPWPVAYTTMDDTNLKIYDAELVETNKINEPGTIIETTKKAIIVATNDNEAVAIKDMQLAGKKRMLAANYLSGAQNTLVGKKLI</sequence>
<gene>
    <name evidence="1" type="primary">fmt</name>
    <name type="ordered locus">SAV1216</name>
</gene>
<reference key="1">
    <citation type="journal article" date="2001" name="Lancet">
        <title>Whole genome sequencing of meticillin-resistant Staphylococcus aureus.</title>
        <authorList>
            <person name="Kuroda M."/>
            <person name="Ohta T."/>
            <person name="Uchiyama I."/>
            <person name="Baba T."/>
            <person name="Yuzawa H."/>
            <person name="Kobayashi I."/>
            <person name="Cui L."/>
            <person name="Oguchi A."/>
            <person name="Aoki K."/>
            <person name="Nagai Y."/>
            <person name="Lian J.-Q."/>
            <person name="Ito T."/>
            <person name="Kanamori M."/>
            <person name="Matsumaru H."/>
            <person name="Maruyama A."/>
            <person name="Murakami H."/>
            <person name="Hosoyama A."/>
            <person name="Mizutani-Ui Y."/>
            <person name="Takahashi N.K."/>
            <person name="Sawano T."/>
            <person name="Inoue R."/>
            <person name="Kaito C."/>
            <person name="Sekimizu K."/>
            <person name="Hirakawa H."/>
            <person name="Kuhara S."/>
            <person name="Goto S."/>
            <person name="Yabuzaki J."/>
            <person name="Kanehisa M."/>
            <person name="Yamashita A."/>
            <person name="Oshima K."/>
            <person name="Furuya K."/>
            <person name="Yoshino C."/>
            <person name="Shiba T."/>
            <person name="Hattori M."/>
            <person name="Ogasawara N."/>
            <person name="Hayashi H."/>
            <person name="Hiramatsu K."/>
        </authorList>
    </citation>
    <scope>NUCLEOTIDE SEQUENCE [LARGE SCALE GENOMIC DNA]</scope>
    <source>
        <strain>Mu50 / ATCC 700699</strain>
    </source>
</reference>
<keyword id="KW-0648">Protein biosynthesis</keyword>
<keyword id="KW-0808">Transferase</keyword>
<accession>P64136</accession>
<accession>Q99UQ2</accession>
<protein>
    <recommendedName>
        <fullName evidence="1">Methionyl-tRNA formyltransferase</fullName>
        <ecNumber evidence="1">2.1.2.9</ecNumber>
    </recommendedName>
</protein>
<comment type="function">
    <text evidence="1">Attaches a formyl group to the free amino group of methionyl-tRNA(fMet). The formyl group appears to play a dual role in the initiator identity of N-formylmethionyl-tRNA by promoting its recognition by IF2 and preventing the misappropriation of this tRNA by the elongation apparatus.</text>
</comment>
<comment type="catalytic activity">
    <reaction evidence="1">
        <text>L-methionyl-tRNA(fMet) + (6R)-10-formyltetrahydrofolate = N-formyl-L-methionyl-tRNA(fMet) + (6S)-5,6,7,8-tetrahydrofolate + H(+)</text>
        <dbReference type="Rhea" id="RHEA:24380"/>
        <dbReference type="Rhea" id="RHEA-COMP:9952"/>
        <dbReference type="Rhea" id="RHEA-COMP:9953"/>
        <dbReference type="ChEBI" id="CHEBI:15378"/>
        <dbReference type="ChEBI" id="CHEBI:57453"/>
        <dbReference type="ChEBI" id="CHEBI:78530"/>
        <dbReference type="ChEBI" id="CHEBI:78844"/>
        <dbReference type="ChEBI" id="CHEBI:195366"/>
        <dbReference type="EC" id="2.1.2.9"/>
    </reaction>
</comment>
<comment type="similarity">
    <text evidence="1">Belongs to the Fmt family.</text>
</comment>
<dbReference type="EC" id="2.1.2.9" evidence="1"/>
<dbReference type="EMBL" id="BA000017">
    <property type="protein sequence ID" value="BAB57378.1"/>
    <property type="molecule type" value="Genomic_DNA"/>
</dbReference>
<dbReference type="RefSeq" id="WP_000161291.1">
    <property type="nucleotide sequence ID" value="NC_002758.2"/>
</dbReference>
<dbReference type="SMR" id="P64136"/>
<dbReference type="KEGG" id="sav:SAV1216"/>
<dbReference type="HOGENOM" id="CLU_033347_1_1_9"/>
<dbReference type="PhylomeDB" id="P64136"/>
<dbReference type="Proteomes" id="UP000002481">
    <property type="component" value="Chromosome"/>
</dbReference>
<dbReference type="GO" id="GO:0005829">
    <property type="term" value="C:cytosol"/>
    <property type="evidence" value="ECO:0007669"/>
    <property type="project" value="TreeGrafter"/>
</dbReference>
<dbReference type="GO" id="GO:0004479">
    <property type="term" value="F:methionyl-tRNA formyltransferase activity"/>
    <property type="evidence" value="ECO:0007669"/>
    <property type="project" value="UniProtKB-UniRule"/>
</dbReference>
<dbReference type="CDD" id="cd08646">
    <property type="entry name" value="FMT_core_Met-tRNA-FMT_N"/>
    <property type="match status" value="1"/>
</dbReference>
<dbReference type="CDD" id="cd08704">
    <property type="entry name" value="Met_tRNA_FMT_C"/>
    <property type="match status" value="1"/>
</dbReference>
<dbReference type="FunFam" id="3.40.50.12230:FF:000001">
    <property type="entry name" value="Methionyl-tRNA formyltransferase"/>
    <property type="match status" value="1"/>
</dbReference>
<dbReference type="FunFam" id="3.40.50.170:FF:000004">
    <property type="entry name" value="Methionyl-tRNA formyltransferase"/>
    <property type="match status" value="1"/>
</dbReference>
<dbReference type="Gene3D" id="3.10.25.10">
    <property type="entry name" value="Formyl transferase, C-terminal domain"/>
    <property type="match status" value="1"/>
</dbReference>
<dbReference type="Gene3D" id="3.40.50.170">
    <property type="entry name" value="Formyl transferase, N-terminal domain"/>
    <property type="match status" value="1"/>
</dbReference>
<dbReference type="HAMAP" id="MF_00182">
    <property type="entry name" value="Formyl_trans"/>
    <property type="match status" value="1"/>
</dbReference>
<dbReference type="InterPro" id="IPR005794">
    <property type="entry name" value="Fmt"/>
</dbReference>
<dbReference type="InterPro" id="IPR005793">
    <property type="entry name" value="Formyl_trans_C"/>
</dbReference>
<dbReference type="InterPro" id="IPR037022">
    <property type="entry name" value="Formyl_trans_C_sf"/>
</dbReference>
<dbReference type="InterPro" id="IPR002376">
    <property type="entry name" value="Formyl_transf_N"/>
</dbReference>
<dbReference type="InterPro" id="IPR036477">
    <property type="entry name" value="Formyl_transf_N_sf"/>
</dbReference>
<dbReference type="InterPro" id="IPR011034">
    <property type="entry name" value="Formyl_transferase-like_C_sf"/>
</dbReference>
<dbReference type="InterPro" id="IPR001555">
    <property type="entry name" value="GART_AS"/>
</dbReference>
<dbReference type="InterPro" id="IPR044135">
    <property type="entry name" value="Met-tRNA-FMT_C"/>
</dbReference>
<dbReference type="InterPro" id="IPR041711">
    <property type="entry name" value="Met-tRNA-FMT_N"/>
</dbReference>
<dbReference type="NCBIfam" id="TIGR00460">
    <property type="entry name" value="fmt"/>
    <property type="match status" value="1"/>
</dbReference>
<dbReference type="PANTHER" id="PTHR11138">
    <property type="entry name" value="METHIONYL-TRNA FORMYLTRANSFERASE"/>
    <property type="match status" value="1"/>
</dbReference>
<dbReference type="PANTHER" id="PTHR11138:SF5">
    <property type="entry name" value="METHIONYL-TRNA FORMYLTRANSFERASE, MITOCHONDRIAL"/>
    <property type="match status" value="1"/>
</dbReference>
<dbReference type="Pfam" id="PF02911">
    <property type="entry name" value="Formyl_trans_C"/>
    <property type="match status" value="1"/>
</dbReference>
<dbReference type="Pfam" id="PF00551">
    <property type="entry name" value="Formyl_trans_N"/>
    <property type="match status" value="1"/>
</dbReference>
<dbReference type="SUPFAM" id="SSF50486">
    <property type="entry name" value="FMT C-terminal domain-like"/>
    <property type="match status" value="1"/>
</dbReference>
<dbReference type="SUPFAM" id="SSF53328">
    <property type="entry name" value="Formyltransferase"/>
    <property type="match status" value="1"/>
</dbReference>
<dbReference type="PROSITE" id="PS00373">
    <property type="entry name" value="GART"/>
    <property type="match status" value="1"/>
</dbReference>
<organism>
    <name type="scientific">Staphylococcus aureus (strain Mu50 / ATCC 700699)</name>
    <dbReference type="NCBI Taxonomy" id="158878"/>
    <lineage>
        <taxon>Bacteria</taxon>
        <taxon>Bacillati</taxon>
        <taxon>Bacillota</taxon>
        <taxon>Bacilli</taxon>
        <taxon>Bacillales</taxon>
        <taxon>Staphylococcaceae</taxon>
        <taxon>Staphylococcus</taxon>
    </lineage>
</organism>
<name>FMT_STAAM</name>